<proteinExistence type="evidence at protein level"/>
<feature type="signal peptide" evidence="1">
    <location>
        <begin position="1"/>
        <end position="22"/>
    </location>
</feature>
<feature type="propeptide" id="PRO_0000016904" evidence="1">
    <location>
        <begin position="23"/>
        <end position="28"/>
    </location>
</feature>
<feature type="chain" id="PRO_0000016905" description="Serine protease inhibitor 5">
    <location>
        <begin position="29"/>
        <end position="213"/>
    </location>
</feature>
<feature type="short sequence motif" description="Vacuolar targeting signal" evidence="1">
    <location>
        <begin position="25"/>
        <end position="30"/>
    </location>
</feature>
<feature type="site" description="Reactive bond for trypsin" evidence="1">
    <location>
        <begin position="95"/>
        <end position="96"/>
    </location>
</feature>
<feature type="site" description="Reactive bond for chymotrypsin" evidence="1">
    <location>
        <begin position="143"/>
        <end position="144"/>
    </location>
</feature>
<feature type="disulfide bond" evidence="1">
    <location>
        <begin position="76"/>
        <end position="125"/>
    </location>
</feature>
<feature type="disulfide bond" evidence="1">
    <location>
        <begin position="174"/>
        <end position="183"/>
    </location>
</feature>
<name>SPI5_SOLTU</name>
<keyword id="KW-0903">Direct protein sequencing</keyword>
<keyword id="KW-1015">Disulfide bond</keyword>
<keyword id="KW-0646">Protease inhibitor</keyword>
<keyword id="KW-1185">Reference proteome</keyword>
<keyword id="KW-0722">Serine protease inhibitor</keyword>
<keyword id="KW-0732">Signal</keyword>
<keyword id="KW-0926">Vacuole</keyword>
<evidence type="ECO:0000250" key="1"/>
<evidence type="ECO:0000305" key="2"/>
<organism>
    <name type="scientific">Solanum tuberosum</name>
    <name type="common">Potato</name>
    <dbReference type="NCBI Taxonomy" id="4113"/>
    <lineage>
        <taxon>Eukaryota</taxon>
        <taxon>Viridiplantae</taxon>
        <taxon>Streptophyta</taxon>
        <taxon>Embryophyta</taxon>
        <taxon>Tracheophyta</taxon>
        <taxon>Spermatophyta</taxon>
        <taxon>Magnoliopsida</taxon>
        <taxon>eudicotyledons</taxon>
        <taxon>Gunneridae</taxon>
        <taxon>Pentapetalae</taxon>
        <taxon>asterids</taxon>
        <taxon>lamiids</taxon>
        <taxon>Solanales</taxon>
        <taxon>Solanaceae</taxon>
        <taxon>Solanoideae</taxon>
        <taxon>Solaneae</taxon>
        <taxon>Solanum</taxon>
    </lineage>
</organism>
<reference key="1">
    <citation type="journal article" date="1994" name="Plant Cell Physiol.">
        <title>A family of potato genes that encode Kunitz-type proteinase inhibitors: structural comparisons and differential expression.</title>
        <authorList>
            <person name="Ishikawa A."/>
            <person name="Ohta S."/>
            <person name="Matsuoka K."/>
            <person name="Hattori T."/>
            <person name="Nakamura K."/>
        </authorList>
    </citation>
    <scope>NUCLEOTIDE SEQUENCE [GENOMIC DNA]</scope>
    <scope>PROTEIN SEQUENCE OF 29-38</scope>
</reference>
<sequence length="213" mass="23137">MKCLFLLCLCLVPIVVFSSTFTSQNPINLPSDATPVLDVTGKELDPRLSYRIISIGRGALGGDVYLGKSPNSDAPCANGVFRFNSDVGPSGTPVRFIGSSSHFGPHIFEGELLNIQFDISTVKLCVSYTIWKVGDYDASLGTMLLETGGTIGQADSSWFKIVKSSQLGYNLLYCPFSSDDQFCLKVGVVHQNGKRRLALVKDNPLDVSFKQVQ</sequence>
<accession>Q41484</accession>
<comment type="function">
    <text evidence="1">Inhibitor of trypsin (serine protease). Protects the plant by inhibiting proteases of invading organisms (By similarity).</text>
</comment>
<comment type="subcellular location">
    <subcellularLocation>
        <location evidence="1">Vacuole</location>
    </subcellularLocation>
</comment>
<comment type="similarity">
    <text evidence="2">Belongs to the protease inhibitor I3 (leguminous Kunitz-type inhibitor) family.</text>
</comment>
<dbReference type="EMBL" id="D17332">
    <property type="protein sequence ID" value="BAA04152.1"/>
    <property type="molecule type" value="Genomic_DNA"/>
</dbReference>
<dbReference type="PIR" id="T07414">
    <property type="entry name" value="T07414"/>
</dbReference>
<dbReference type="SMR" id="Q41484"/>
<dbReference type="MEROPS" id="I03.020"/>
<dbReference type="InParanoid" id="Q41484"/>
<dbReference type="Proteomes" id="UP000011115">
    <property type="component" value="Unassembled WGS sequence"/>
</dbReference>
<dbReference type="ExpressionAtlas" id="Q41484">
    <property type="expression patterns" value="baseline"/>
</dbReference>
<dbReference type="GO" id="GO:0005773">
    <property type="term" value="C:vacuole"/>
    <property type="evidence" value="ECO:0007669"/>
    <property type="project" value="UniProtKB-SubCell"/>
</dbReference>
<dbReference type="GO" id="GO:0004867">
    <property type="term" value="F:serine-type endopeptidase inhibitor activity"/>
    <property type="evidence" value="ECO:0007669"/>
    <property type="project" value="UniProtKB-KW"/>
</dbReference>
<dbReference type="CDD" id="cd23372">
    <property type="entry name" value="beta-trefoil_STI_CPI-like"/>
    <property type="match status" value="1"/>
</dbReference>
<dbReference type="FunFam" id="2.80.10.50:FF:000090">
    <property type="entry name" value="Kunitz-type inhibitor B"/>
    <property type="match status" value="1"/>
</dbReference>
<dbReference type="Gene3D" id="2.80.10.50">
    <property type="match status" value="1"/>
</dbReference>
<dbReference type="InterPro" id="IPR011065">
    <property type="entry name" value="Kunitz_inhibitor_STI-like_sf"/>
</dbReference>
<dbReference type="InterPro" id="IPR002160">
    <property type="entry name" value="Prot_inh_Kunz-lg"/>
</dbReference>
<dbReference type="PANTHER" id="PTHR33107">
    <property type="entry name" value="KUNITZ TRYPSIN INHIBITOR 2"/>
    <property type="match status" value="1"/>
</dbReference>
<dbReference type="PANTHER" id="PTHR33107:SF38">
    <property type="entry name" value="SERINE PROTEASE INHIBITOR 5"/>
    <property type="match status" value="1"/>
</dbReference>
<dbReference type="Pfam" id="PF00197">
    <property type="entry name" value="Kunitz_legume"/>
    <property type="match status" value="1"/>
</dbReference>
<dbReference type="PRINTS" id="PR00291">
    <property type="entry name" value="KUNITZINHBTR"/>
</dbReference>
<dbReference type="SMART" id="SM00452">
    <property type="entry name" value="STI"/>
    <property type="match status" value="1"/>
</dbReference>
<dbReference type="SUPFAM" id="SSF50386">
    <property type="entry name" value="STI-like"/>
    <property type="match status" value="1"/>
</dbReference>
<dbReference type="PROSITE" id="PS00283">
    <property type="entry name" value="SOYBEAN_KUNITZ"/>
    <property type="match status" value="1"/>
</dbReference>
<protein>
    <recommendedName>
        <fullName>Serine protease inhibitor 5</fullName>
    </recommendedName>
    <alternativeName>
        <fullName>gCDI-B1</fullName>
    </alternativeName>
</protein>